<keyword id="KW-0997">Cell inner membrane</keyword>
<keyword id="KW-1003">Cell membrane</keyword>
<keyword id="KW-0472">Membrane</keyword>
<keyword id="KW-0812">Transmembrane</keyword>
<keyword id="KW-1133">Transmembrane helix</keyword>
<keyword id="KW-0813">Transport</keyword>
<name>MDTJ_ENT38</name>
<comment type="function">
    <text evidence="1">Catalyzes the excretion of spermidine.</text>
</comment>
<comment type="subunit">
    <text evidence="1">Forms a complex with MdtI.</text>
</comment>
<comment type="subcellular location">
    <subcellularLocation>
        <location evidence="1">Cell inner membrane</location>
        <topology evidence="1">Multi-pass membrane protein</topology>
    </subcellularLocation>
</comment>
<comment type="similarity">
    <text evidence="1">Belongs to the drug/metabolite transporter (DMT) superfamily. Small multidrug resistance (SMR) (TC 2.A.7.1) family. MdtJ subfamily.</text>
</comment>
<reference key="1">
    <citation type="journal article" date="2010" name="PLoS Genet.">
        <title>Genome sequence of the plant growth promoting endophytic bacterium Enterobacter sp. 638.</title>
        <authorList>
            <person name="Taghavi S."/>
            <person name="van der Lelie D."/>
            <person name="Hoffman A."/>
            <person name="Zhang Y.B."/>
            <person name="Walla M.D."/>
            <person name="Vangronsveld J."/>
            <person name="Newman L."/>
            <person name="Monchy S."/>
        </authorList>
    </citation>
    <scope>NUCLEOTIDE SEQUENCE [LARGE SCALE GENOMIC DNA]</scope>
    <source>
        <strain>638</strain>
    </source>
</reference>
<accession>A4WA57</accession>
<protein>
    <recommendedName>
        <fullName evidence="1">Spermidine export protein MdtJ</fullName>
    </recommendedName>
</protein>
<gene>
    <name evidence="1" type="primary">mdtJ</name>
    <name type="ordered locus">Ent638_1911</name>
</gene>
<sequence length="120" mass="13069">MFYWILLALAIVAEITGTLSMKWASISDDNTGFILMLVMISLSYIFLSFAVKKIALGVAYALWEGIGILLITLFSVMLFDEALSTMKIAGLATLVVGIVLIKSGTRKPTKQPKEQAHATV</sequence>
<proteinExistence type="inferred from homology"/>
<feature type="chain" id="PRO_0000331165" description="Spermidine export protein MdtJ">
    <location>
        <begin position="1"/>
        <end position="120"/>
    </location>
</feature>
<feature type="transmembrane region" description="Helical" evidence="1">
    <location>
        <begin position="1"/>
        <end position="21"/>
    </location>
</feature>
<feature type="transmembrane region" description="Helical" evidence="1">
    <location>
        <begin position="31"/>
        <end position="51"/>
    </location>
</feature>
<feature type="transmembrane region" description="Helical" evidence="1">
    <location>
        <begin position="54"/>
        <end position="74"/>
    </location>
</feature>
<feature type="transmembrane region" description="Helical" evidence="1">
    <location>
        <begin position="81"/>
        <end position="101"/>
    </location>
</feature>
<dbReference type="EMBL" id="CP000653">
    <property type="protein sequence ID" value="ABP60587.1"/>
    <property type="molecule type" value="Genomic_DNA"/>
</dbReference>
<dbReference type="RefSeq" id="WP_012017302.1">
    <property type="nucleotide sequence ID" value="NC_009436.1"/>
</dbReference>
<dbReference type="SMR" id="A4WA57"/>
<dbReference type="STRING" id="399742.Ent638_1911"/>
<dbReference type="KEGG" id="ent:Ent638_1911"/>
<dbReference type="eggNOG" id="COG2076">
    <property type="taxonomic scope" value="Bacteria"/>
</dbReference>
<dbReference type="HOGENOM" id="CLU_133067_0_0_6"/>
<dbReference type="OrthoDB" id="9808638at2"/>
<dbReference type="Proteomes" id="UP000000230">
    <property type="component" value="Chromosome"/>
</dbReference>
<dbReference type="GO" id="GO:0005886">
    <property type="term" value="C:plasma membrane"/>
    <property type="evidence" value="ECO:0007669"/>
    <property type="project" value="UniProtKB-SubCell"/>
</dbReference>
<dbReference type="GO" id="GO:0015199">
    <property type="term" value="F:amino-acid betaine transmembrane transporter activity"/>
    <property type="evidence" value="ECO:0007669"/>
    <property type="project" value="TreeGrafter"/>
</dbReference>
<dbReference type="GO" id="GO:0015297">
    <property type="term" value="F:antiporter activity"/>
    <property type="evidence" value="ECO:0007669"/>
    <property type="project" value="TreeGrafter"/>
</dbReference>
<dbReference type="GO" id="GO:0015220">
    <property type="term" value="F:choline transmembrane transporter activity"/>
    <property type="evidence" value="ECO:0007669"/>
    <property type="project" value="TreeGrafter"/>
</dbReference>
<dbReference type="GO" id="GO:0015606">
    <property type="term" value="F:spermidine transmembrane transporter activity"/>
    <property type="evidence" value="ECO:0007669"/>
    <property type="project" value="UniProtKB-UniRule"/>
</dbReference>
<dbReference type="GO" id="GO:0031460">
    <property type="term" value="P:glycine betaine transport"/>
    <property type="evidence" value="ECO:0007669"/>
    <property type="project" value="TreeGrafter"/>
</dbReference>
<dbReference type="FunFam" id="1.10.3730.20:FF:000001">
    <property type="entry name" value="Quaternary ammonium compound resistance transporter SugE"/>
    <property type="match status" value="1"/>
</dbReference>
<dbReference type="Gene3D" id="1.10.3730.20">
    <property type="match status" value="1"/>
</dbReference>
<dbReference type="HAMAP" id="MF_01598">
    <property type="entry name" value="MdtJ"/>
    <property type="match status" value="1"/>
</dbReference>
<dbReference type="InterPro" id="IPR000390">
    <property type="entry name" value="Small_drug/metabolite_transptr"/>
</dbReference>
<dbReference type="InterPro" id="IPR045324">
    <property type="entry name" value="Small_multidrug_res"/>
</dbReference>
<dbReference type="InterPro" id="IPR023740">
    <property type="entry name" value="Spermidine_export_MdtJ"/>
</dbReference>
<dbReference type="NCBIfam" id="NF007767">
    <property type="entry name" value="PRK10452.1"/>
    <property type="match status" value="1"/>
</dbReference>
<dbReference type="PANTHER" id="PTHR30561">
    <property type="entry name" value="SMR FAMILY PROTON-DEPENDENT DRUG EFFLUX TRANSPORTER SUGE"/>
    <property type="match status" value="1"/>
</dbReference>
<dbReference type="PANTHER" id="PTHR30561:SF2">
    <property type="entry name" value="SPERMIDINE EXPORT PROTEIN MDTJ"/>
    <property type="match status" value="1"/>
</dbReference>
<dbReference type="Pfam" id="PF00893">
    <property type="entry name" value="Multi_Drug_Res"/>
    <property type="match status" value="1"/>
</dbReference>
<dbReference type="SUPFAM" id="SSF103481">
    <property type="entry name" value="Multidrug resistance efflux transporter EmrE"/>
    <property type="match status" value="1"/>
</dbReference>
<organism>
    <name type="scientific">Enterobacter sp. (strain 638)</name>
    <dbReference type="NCBI Taxonomy" id="399742"/>
    <lineage>
        <taxon>Bacteria</taxon>
        <taxon>Pseudomonadati</taxon>
        <taxon>Pseudomonadota</taxon>
        <taxon>Gammaproteobacteria</taxon>
        <taxon>Enterobacterales</taxon>
        <taxon>Enterobacteriaceae</taxon>
        <taxon>Enterobacter</taxon>
    </lineage>
</organism>
<evidence type="ECO:0000255" key="1">
    <source>
        <dbReference type="HAMAP-Rule" id="MF_01598"/>
    </source>
</evidence>